<sequence>MSEIPIVSNHDLEKYVDRKVVIQGWVHGIRGSNARQFISLRNGGRILQVLAEKEILGEEVFQTVKHLRQETSVSVAGTLVKNEKSSVGFELIMDRIRIVGESENYPITPKEHGIDFLISQRHLWLRSSKQLAILRVRDNLSFAIRKYFHERDFLLIDTPILTGSVGESAGTLFSTEYFDLGNAYLAQTGQLYLEAAIFAHNKVFCYGPTFRAEKSKTRRHLTEFWMVEAEVAFAGHADNLKLQEDFVKTVIKETVQNSLQDLKVLERDPTPLLAYLEKDFPVIDYTKALEILKLKGEDIVWGDDINSEREQMLTMEFGGPIFIQKYPREAKAFYMKVNPDNPKTVLNADLIAPDGVGEIIGGSEREENYENIILRLEEEKLPVESYDWYLDLRKYGSVPHSGFGLGSERMIAWICGLQHVRECIPFPRMMERLYP</sequence>
<evidence type="ECO:0000255" key="1">
    <source>
        <dbReference type="HAMAP-Rule" id="MF_00534"/>
    </source>
</evidence>
<keyword id="KW-0030">Aminoacyl-tRNA synthetase</keyword>
<keyword id="KW-0067">ATP-binding</keyword>
<keyword id="KW-0963">Cytoplasm</keyword>
<keyword id="KW-0436">Ligase</keyword>
<keyword id="KW-0547">Nucleotide-binding</keyword>
<keyword id="KW-0648">Protein biosynthesis</keyword>
<feature type="chain" id="PRO_1000128211" description="Asparagine--tRNA ligase">
    <location>
        <begin position="1"/>
        <end position="435"/>
    </location>
</feature>
<gene>
    <name evidence="1" type="primary">asnS</name>
    <name type="ordered locus">LBL_1869</name>
</gene>
<protein>
    <recommendedName>
        <fullName evidence="1">Asparagine--tRNA ligase</fullName>
        <ecNumber evidence="1">6.1.1.22</ecNumber>
    </recommendedName>
    <alternativeName>
        <fullName evidence="1">Asparaginyl-tRNA synthetase</fullName>
        <shortName evidence="1">AsnRS</shortName>
    </alternativeName>
</protein>
<reference key="1">
    <citation type="journal article" date="2006" name="Proc. Natl. Acad. Sci. U.S.A.">
        <title>Genome reduction in Leptospira borgpetersenii reflects limited transmission potential.</title>
        <authorList>
            <person name="Bulach D.M."/>
            <person name="Zuerner R.L."/>
            <person name="Wilson P."/>
            <person name="Seemann T."/>
            <person name="McGrath A."/>
            <person name="Cullen P.A."/>
            <person name="Davis J."/>
            <person name="Johnson M."/>
            <person name="Kuczek E."/>
            <person name="Alt D.P."/>
            <person name="Peterson-Burch B."/>
            <person name="Coppel R.L."/>
            <person name="Rood J.I."/>
            <person name="Davies J.K."/>
            <person name="Adler B."/>
        </authorList>
    </citation>
    <scope>NUCLEOTIDE SEQUENCE [LARGE SCALE GENOMIC DNA]</scope>
    <source>
        <strain>L550</strain>
    </source>
</reference>
<proteinExistence type="inferred from homology"/>
<accession>Q050D9</accession>
<dbReference type="EC" id="6.1.1.22" evidence="1"/>
<dbReference type="EMBL" id="CP000348">
    <property type="protein sequence ID" value="ABJ79306.1"/>
    <property type="molecule type" value="Genomic_DNA"/>
</dbReference>
<dbReference type="RefSeq" id="WP_011670404.1">
    <property type="nucleotide sequence ID" value="NC_008508.1"/>
</dbReference>
<dbReference type="SMR" id="Q050D9"/>
<dbReference type="KEGG" id="lbl:LBL_1869"/>
<dbReference type="PATRIC" id="fig|355276.3.peg.2385"/>
<dbReference type="HOGENOM" id="CLU_004553_2_0_12"/>
<dbReference type="GO" id="GO:0005737">
    <property type="term" value="C:cytoplasm"/>
    <property type="evidence" value="ECO:0007669"/>
    <property type="project" value="UniProtKB-SubCell"/>
</dbReference>
<dbReference type="GO" id="GO:0004816">
    <property type="term" value="F:asparagine-tRNA ligase activity"/>
    <property type="evidence" value="ECO:0007669"/>
    <property type="project" value="UniProtKB-UniRule"/>
</dbReference>
<dbReference type="GO" id="GO:0005524">
    <property type="term" value="F:ATP binding"/>
    <property type="evidence" value="ECO:0007669"/>
    <property type="project" value="UniProtKB-UniRule"/>
</dbReference>
<dbReference type="GO" id="GO:0003676">
    <property type="term" value="F:nucleic acid binding"/>
    <property type="evidence" value="ECO:0007669"/>
    <property type="project" value="InterPro"/>
</dbReference>
<dbReference type="GO" id="GO:0006421">
    <property type="term" value="P:asparaginyl-tRNA aminoacylation"/>
    <property type="evidence" value="ECO:0007669"/>
    <property type="project" value="UniProtKB-UniRule"/>
</dbReference>
<dbReference type="CDD" id="cd04323">
    <property type="entry name" value="AsnRS_cyto_like_N"/>
    <property type="match status" value="1"/>
</dbReference>
<dbReference type="CDD" id="cd00776">
    <property type="entry name" value="AsxRS_core"/>
    <property type="match status" value="1"/>
</dbReference>
<dbReference type="Gene3D" id="3.30.930.10">
    <property type="entry name" value="Bira Bifunctional Protein, Domain 2"/>
    <property type="match status" value="1"/>
</dbReference>
<dbReference type="Gene3D" id="2.40.50.140">
    <property type="entry name" value="Nucleic acid-binding proteins"/>
    <property type="match status" value="1"/>
</dbReference>
<dbReference type="HAMAP" id="MF_00534">
    <property type="entry name" value="Asn_tRNA_synth"/>
    <property type="match status" value="1"/>
</dbReference>
<dbReference type="InterPro" id="IPR004364">
    <property type="entry name" value="Aa-tRNA-synt_II"/>
</dbReference>
<dbReference type="InterPro" id="IPR006195">
    <property type="entry name" value="aa-tRNA-synth_II"/>
</dbReference>
<dbReference type="InterPro" id="IPR045864">
    <property type="entry name" value="aa-tRNA-synth_II/BPL/LPL"/>
</dbReference>
<dbReference type="InterPro" id="IPR004522">
    <property type="entry name" value="Asn-tRNA-ligase"/>
</dbReference>
<dbReference type="InterPro" id="IPR002312">
    <property type="entry name" value="Asp/Asn-tRNA-synth_IIb"/>
</dbReference>
<dbReference type="InterPro" id="IPR012340">
    <property type="entry name" value="NA-bd_OB-fold"/>
</dbReference>
<dbReference type="InterPro" id="IPR004365">
    <property type="entry name" value="NA-bd_OB_tRNA"/>
</dbReference>
<dbReference type="NCBIfam" id="TIGR00457">
    <property type="entry name" value="asnS"/>
    <property type="match status" value="1"/>
</dbReference>
<dbReference type="NCBIfam" id="NF003037">
    <property type="entry name" value="PRK03932.1"/>
    <property type="match status" value="1"/>
</dbReference>
<dbReference type="PANTHER" id="PTHR22594:SF34">
    <property type="entry name" value="ASPARAGINE--TRNA LIGASE, MITOCHONDRIAL-RELATED"/>
    <property type="match status" value="1"/>
</dbReference>
<dbReference type="PANTHER" id="PTHR22594">
    <property type="entry name" value="ASPARTYL/LYSYL-TRNA SYNTHETASE"/>
    <property type="match status" value="1"/>
</dbReference>
<dbReference type="Pfam" id="PF00152">
    <property type="entry name" value="tRNA-synt_2"/>
    <property type="match status" value="1"/>
</dbReference>
<dbReference type="Pfam" id="PF01336">
    <property type="entry name" value="tRNA_anti-codon"/>
    <property type="match status" value="1"/>
</dbReference>
<dbReference type="PRINTS" id="PR01042">
    <property type="entry name" value="TRNASYNTHASP"/>
</dbReference>
<dbReference type="SUPFAM" id="SSF55681">
    <property type="entry name" value="Class II aaRS and biotin synthetases"/>
    <property type="match status" value="1"/>
</dbReference>
<dbReference type="SUPFAM" id="SSF50249">
    <property type="entry name" value="Nucleic acid-binding proteins"/>
    <property type="match status" value="1"/>
</dbReference>
<dbReference type="PROSITE" id="PS50862">
    <property type="entry name" value="AA_TRNA_LIGASE_II"/>
    <property type="match status" value="1"/>
</dbReference>
<organism>
    <name type="scientific">Leptospira borgpetersenii serovar Hardjo-bovis (strain L550)</name>
    <dbReference type="NCBI Taxonomy" id="355276"/>
    <lineage>
        <taxon>Bacteria</taxon>
        <taxon>Pseudomonadati</taxon>
        <taxon>Spirochaetota</taxon>
        <taxon>Spirochaetia</taxon>
        <taxon>Leptospirales</taxon>
        <taxon>Leptospiraceae</taxon>
        <taxon>Leptospira</taxon>
    </lineage>
</organism>
<name>SYN_LEPBL</name>
<comment type="catalytic activity">
    <reaction evidence="1">
        <text>tRNA(Asn) + L-asparagine + ATP = L-asparaginyl-tRNA(Asn) + AMP + diphosphate + H(+)</text>
        <dbReference type="Rhea" id="RHEA:11180"/>
        <dbReference type="Rhea" id="RHEA-COMP:9659"/>
        <dbReference type="Rhea" id="RHEA-COMP:9674"/>
        <dbReference type="ChEBI" id="CHEBI:15378"/>
        <dbReference type="ChEBI" id="CHEBI:30616"/>
        <dbReference type="ChEBI" id="CHEBI:33019"/>
        <dbReference type="ChEBI" id="CHEBI:58048"/>
        <dbReference type="ChEBI" id="CHEBI:78442"/>
        <dbReference type="ChEBI" id="CHEBI:78515"/>
        <dbReference type="ChEBI" id="CHEBI:456215"/>
        <dbReference type="EC" id="6.1.1.22"/>
    </reaction>
</comment>
<comment type="subunit">
    <text evidence="1">Homodimer.</text>
</comment>
<comment type="subcellular location">
    <subcellularLocation>
        <location evidence="1">Cytoplasm</location>
    </subcellularLocation>
</comment>
<comment type="similarity">
    <text evidence="1">Belongs to the class-II aminoacyl-tRNA synthetase family.</text>
</comment>